<name>C2CD5_XENTR</name>
<gene>
    <name type="primary">c2cd5</name>
    <name type="ORF">TGas115n11.1</name>
</gene>
<sequence length="1014" mass="110879">MPGKLKVKIVAGRHLPVMDRASDLTDAFVEVKFGNTTFKTDVYHKSLNPQWNSEWFKFEVDDEDLQDEPLQITVLDHDTYSANDAIGKVYIDIDPLLYTEAATVISGWFPIYDTIHGIRGEISVLVKVDLFNDLNRFRQSSCGVKFFCTTSIPKSYRAVVIHGFVEELVVNEDPEYQWIDRIRTPRASNEARQRLISLMSGELQRKIGLKVLEMRGNAVVGYLQCFDLEGESGLVVRAIGTACTLDKLSNPAPFAPSCNSPCKEIKEAPFIEELNPNTHSSGPSTPLKNQTYSFSPSKSFSRQSSSSDTDLSLTPKTGMGSGSAGRDGGAFKALLRQQTQSALEQREFPFFTLTSFPPTFLVHVGGVVSARSVKLLDRIHNPDEPETRDAWWAEIRQEIKSHARALGCHAVVGYSESTSICEEVCILSASGTAAVLNPKFLQEASAEGCLEQRSEETSPTPCAFCHIPYDELNMPFPANLTYCCACRKQKVPDVLFTTIDLPSDAPVIGKGCLIQARLCRLKKKSQAEANATVISSLLPFMEYELHTQLMNKLKLKGMNGLFGLRIQITVGESMLLGLASATGVYLSSLPTPGGIQIAGKTPSEGSYDQHISHMQKKINETIAKNKDLYEINPPEILEETVGSPIPEPRQRTRLLRSQSESSDEAAELDLSHGKKDAFVLEIDDTDAMEDVHSLLTDVAPPPGFYSCNTEIMPGINNWIPNIQMFSSVRVIRLNSTNLTNQTLNKNFNDLCENLLKSLYFKLRSMVPCCLCHVNFTVAVPEEESIQVAVTAVAITFDKQQALQVPKPRPEKPQPRGSDPEEQLQFPLELSSDSPGPSTFSPARDVPERGGSPAGATQRAVSLDKSSPLAESHLRHRGGGGGAIPSVTVVKMTPLSFIPGAKITKFLGIINMFFIRETTSLREEGGVSGFLHAFICEVFAMVRAHVAALGGNAVVSYIMKQCVFMENANKNQAQCLINVSGDAVIFISESEVEAGPGQPTAPGPQSAGVGGDSAT</sequence>
<comment type="function">
    <text evidence="1">May be required for insulin-stimulated glucose transport and glucose transporter SLC2A4/GLUT4 translocation from intracellular glucose storage vesicle (GSV) to the plasma membrane (PM) in adipocytes. May bind phospholipid membranes in a calcium-dependent manner (By similarity).</text>
</comment>
<comment type="cofactor">
    <cofactor evidence="2">
        <name>Ca(2+)</name>
        <dbReference type="ChEBI" id="CHEBI:29108"/>
    </cofactor>
    <text evidence="2">Binds 3 Ca(2+) ions per C2 domain.</text>
</comment>
<comment type="subcellular location">
    <subcellularLocation>
        <location evidence="1">Cytoplasmic vesicle membrane</location>
    </subcellularLocation>
    <subcellularLocation>
        <location evidence="1">Cytoplasm</location>
        <location evidence="1">Cell cortex</location>
    </subcellularLocation>
    <subcellularLocation>
        <location evidence="1">Cell membrane</location>
    </subcellularLocation>
    <subcellularLocation>
        <location evidence="1">Cell projection</location>
        <location evidence="1">Ruffle</location>
    </subcellularLocation>
</comment>
<comment type="domain">
    <text evidence="1">The C2 domain binds to calcium and membrane lipids.</text>
</comment>
<keyword id="KW-0106">Calcium</keyword>
<keyword id="KW-1003">Cell membrane</keyword>
<keyword id="KW-0966">Cell projection</keyword>
<keyword id="KW-0963">Cytoplasm</keyword>
<keyword id="KW-0968">Cytoplasmic vesicle</keyword>
<keyword id="KW-0446">Lipid-binding</keyword>
<keyword id="KW-0472">Membrane</keyword>
<keyword id="KW-0479">Metal-binding</keyword>
<keyword id="KW-0653">Protein transport</keyword>
<keyword id="KW-1185">Reference proteome</keyword>
<keyword id="KW-0813">Transport</keyword>
<reference key="1">
    <citation type="submission" date="2006-03" db="EMBL/GenBank/DDBJ databases">
        <authorList>
            <consortium name="Sanger Xenopus tropicalis EST/cDNA project"/>
        </authorList>
    </citation>
    <scope>NUCLEOTIDE SEQUENCE [LARGE SCALE MRNA]</scope>
    <source>
        <tissue>Gastrula</tissue>
    </source>
</reference>
<feature type="chain" id="PRO_0000247453" description="C2 domain-containing protein 5">
    <location>
        <begin position="1"/>
        <end position="1014"/>
    </location>
</feature>
<feature type="domain" description="C2" evidence="2">
    <location>
        <begin position="1"/>
        <end position="109"/>
    </location>
</feature>
<feature type="region of interest" description="Disordered" evidence="3">
    <location>
        <begin position="274"/>
        <end position="328"/>
    </location>
</feature>
<feature type="region of interest" description="Disordered" evidence="3">
    <location>
        <begin position="639"/>
        <end position="669"/>
    </location>
</feature>
<feature type="region of interest" description="Disordered" evidence="3">
    <location>
        <begin position="801"/>
        <end position="878"/>
    </location>
</feature>
<feature type="region of interest" description="Disordered" evidence="3">
    <location>
        <begin position="992"/>
        <end position="1014"/>
    </location>
</feature>
<feature type="compositionally biased region" description="Polar residues" evidence="3">
    <location>
        <begin position="275"/>
        <end position="292"/>
    </location>
</feature>
<feature type="compositionally biased region" description="Low complexity" evidence="3">
    <location>
        <begin position="293"/>
        <end position="318"/>
    </location>
</feature>
<feature type="compositionally biased region" description="Gly residues" evidence="3">
    <location>
        <begin position="319"/>
        <end position="328"/>
    </location>
</feature>
<feature type="compositionally biased region" description="Polar residues" evidence="3">
    <location>
        <begin position="830"/>
        <end position="840"/>
    </location>
</feature>
<feature type="compositionally biased region" description="Low complexity" evidence="3">
    <location>
        <begin position="993"/>
        <end position="1006"/>
    </location>
</feature>
<feature type="binding site" evidence="2">
    <location>
        <position position="19"/>
    </location>
    <ligand>
        <name>Ca(2+)</name>
        <dbReference type="ChEBI" id="CHEBI:29108"/>
        <label>1</label>
    </ligand>
</feature>
<feature type="binding site" evidence="2">
    <location>
        <position position="19"/>
    </location>
    <ligand>
        <name>Ca(2+)</name>
        <dbReference type="ChEBI" id="CHEBI:29108"/>
        <label>2</label>
    </ligand>
</feature>
<feature type="binding site" evidence="2">
    <location>
        <position position="26"/>
    </location>
    <ligand>
        <name>Ca(2+)</name>
        <dbReference type="ChEBI" id="CHEBI:29108"/>
        <label>1</label>
    </ligand>
</feature>
<feature type="binding site" evidence="2">
    <location>
        <position position="76"/>
    </location>
    <ligand>
        <name>Ca(2+)</name>
        <dbReference type="ChEBI" id="CHEBI:29108"/>
        <label>1</label>
    </ligand>
</feature>
<feature type="binding site" evidence="2">
    <location>
        <position position="76"/>
    </location>
    <ligand>
        <name>Ca(2+)</name>
        <dbReference type="ChEBI" id="CHEBI:29108"/>
        <label>2</label>
    </ligand>
</feature>
<feature type="binding site" evidence="2">
    <location>
        <position position="78"/>
    </location>
    <ligand>
        <name>Ca(2+)</name>
        <dbReference type="ChEBI" id="CHEBI:29108"/>
        <label>1</label>
    </ligand>
</feature>
<feature type="binding site" evidence="2">
    <location>
        <position position="78"/>
    </location>
    <ligand>
        <name>Ca(2+)</name>
        <dbReference type="ChEBI" id="CHEBI:29108"/>
        <label>2</label>
    </ligand>
</feature>
<feature type="binding site" evidence="2">
    <location>
        <position position="78"/>
    </location>
    <ligand>
        <name>Ca(2+)</name>
        <dbReference type="ChEBI" id="CHEBI:29108"/>
        <label>3</label>
    </ligand>
</feature>
<feature type="binding site" evidence="2">
    <location>
        <position position="81"/>
    </location>
    <ligand>
        <name>Ca(2+)</name>
        <dbReference type="ChEBI" id="CHEBI:29108"/>
        <label>3</label>
    </ligand>
</feature>
<feature type="binding site" evidence="2">
    <location>
        <position position="84"/>
    </location>
    <ligand>
        <name>Ca(2+)</name>
        <dbReference type="ChEBI" id="CHEBI:29108"/>
        <label>2</label>
    </ligand>
</feature>
<feature type="binding site" evidence="2">
    <location>
        <position position="84"/>
    </location>
    <ligand>
        <name>Ca(2+)</name>
        <dbReference type="ChEBI" id="CHEBI:29108"/>
        <label>3</label>
    </ligand>
</feature>
<organism>
    <name type="scientific">Xenopus tropicalis</name>
    <name type="common">Western clawed frog</name>
    <name type="synonym">Silurana tropicalis</name>
    <dbReference type="NCBI Taxonomy" id="8364"/>
    <lineage>
        <taxon>Eukaryota</taxon>
        <taxon>Metazoa</taxon>
        <taxon>Chordata</taxon>
        <taxon>Craniata</taxon>
        <taxon>Vertebrata</taxon>
        <taxon>Euteleostomi</taxon>
        <taxon>Amphibia</taxon>
        <taxon>Batrachia</taxon>
        <taxon>Anura</taxon>
        <taxon>Pipoidea</taxon>
        <taxon>Pipidae</taxon>
        <taxon>Xenopodinae</taxon>
        <taxon>Xenopus</taxon>
        <taxon>Silurana</taxon>
    </lineage>
</organism>
<dbReference type="EMBL" id="CR942580">
    <property type="protein sequence ID" value="CAJ82501.1"/>
    <property type="molecule type" value="mRNA"/>
</dbReference>
<dbReference type="RefSeq" id="NP_001039153.1">
    <property type="nucleotide sequence ID" value="NM_001045688.1"/>
</dbReference>
<dbReference type="SMR" id="Q28BX9"/>
<dbReference type="FunCoup" id="Q28BX9">
    <property type="interactions" value="3377"/>
</dbReference>
<dbReference type="PaxDb" id="8364-ENSXETP00000012209"/>
<dbReference type="GeneID" id="733979"/>
<dbReference type="KEGG" id="xtr:733979"/>
<dbReference type="AGR" id="Xenbase:XB-GENE-5915013"/>
<dbReference type="CTD" id="9847"/>
<dbReference type="Xenbase" id="XB-GENE-5915013">
    <property type="gene designation" value="c2cd5"/>
</dbReference>
<dbReference type="eggNOG" id="KOG1031">
    <property type="taxonomic scope" value="Eukaryota"/>
</dbReference>
<dbReference type="InParanoid" id="Q28BX9"/>
<dbReference type="OMA" id="TMFYLES"/>
<dbReference type="OrthoDB" id="419768at2759"/>
<dbReference type="Proteomes" id="UP000008143">
    <property type="component" value="Chromosome 3"/>
</dbReference>
<dbReference type="GO" id="GO:0005938">
    <property type="term" value="C:cell cortex"/>
    <property type="evidence" value="ECO:0000250"/>
    <property type="project" value="UniProtKB"/>
</dbReference>
<dbReference type="GO" id="GO:0030659">
    <property type="term" value="C:cytoplasmic vesicle membrane"/>
    <property type="evidence" value="ECO:0000250"/>
    <property type="project" value="UniProtKB"/>
</dbReference>
<dbReference type="GO" id="GO:0005886">
    <property type="term" value="C:plasma membrane"/>
    <property type="evidence" value="ECO:0000250"/>
    <property type="project" value="UniProtKB"/>
</dbReference>
<dbReference type="GO" id="GO:0032587">
    <property type="term" value="C:ruffle membrane"/>
    <property type="evidence" value="ECO:0000250"/>
    <property type="project" value="UniProtKB"/>
</dbReference>
<dbReference type="GO" id="GO:0005509">
    <property type="term" value="F:calcium ion binding"/>
    <property type="evidence" value="ECO:0000250"/>
    <property type="project" value="UniProtKB"/>
</dbReference>
<dbReference type="GO" id="GO:0005544">
    <property type="term" value="F:calcium-dependent phospholipid binding"/>
    <property type="evidence" value="ECO:0000250"/>
    <property type="project" value="UniProtKB"/>
</dbReference>
<dbReference type="GO" id="GO:0008286">
    <property type="term" value="P:insulin receptor signaling pathway"/>
    <property type="evidence" value="ECO:0000250"/>
    <property type="project" value="UniProtKB"/>
</dbReference>
<dbReference type="GO" id="GO:0065002">
    <property type="term" value="P:intracellular protein transmembrane transport"/>
    <property type="evidence" value="ECO:0000250"/>
    <property type="project" value="UniProtKB"/>
</dbReference>
<dbReference type="GO" id="GO:0010828">
    <property type="term" value="P:positive regulation of D-glucose transmembrane transport"/>
    <property type="evidence" value="ECO:0000250"/>
    <property type="project" value="UniProtKB"/>
</dbReference>
<dbReference type="GO" id="GO:0090314">
    <property type="term" value="P:positive regulation of protein targeting to membrane"/>
    <property type="evidence" value="ECO:0000250"/>
    <property type="project" value="UniProtKB"/>
</dbReference>
<dbReference type="GO" id="GO:0031340">
    <property type="term" value="P:positive regulation of vesicle fusion"/>
    <property type="evidence" value="ECO:0000250"/>
    <property type="project" value="UniProtKB"/>
</dbReference>
<dbReference type="CDD" id="cd08688">
    <property type="entry name" value="C2_KIAA0528-like"/>
    <property type="match status" value="1"/>
</dbReference>
<dbReference type="FunFam" id="2.60.40.150:FF:000020">
    <property type="entry name" value="C2 calcium dependent domain containing 5"/>
    <property type="match status" value="1"/>
</dbReference>
<dbReference type="Gene3D" id="2.60.40.150">
    <property type="entry name" value="C2 domain"/>
    <property type="match status" value="1"/>
</dbReference>
<dbReference type="InterPro" id="IPR037785">
    <property type="entry name" value="C2_C2CD5"/>
</dbReference>
<dbReference type="InterPro" id="IPR000008">
    <property type="entry name" value="C2_dom"/>
</dbReference>
<dbReference type="InterPro" id="IPR035892">
    <property type="entry name" value="C2_domain_sf"/>
</dbReference>
<dbReference type="InterPro" id="IPR038983">
    <property type="entry name" value="C2CD5"/>
</dbReference>
<dbReference type="InterPro" id="IPR056430">
    <property type="entry name" value="C2CD5_YbjQ-like_dom"/>
</dbReference>
<dbReference type="InterPro" id="IPR056431">
    <property type="entry name" value="C2CD5_YbjQ-rel_dom"/>
</dbReference>
<dbReference type="PANTHER" id="PTHR37412">
    <property type="entry name" value="C2 DOMAIN-CONTAINING PROTEIN 5"/>
    <property type="match status" value="1"/>
</dbReference>
<dbReference type="PANTHER" id="PTHR37412:SF2">
    <property type="entry name" value="C2 DOMAIN-CONTAINING PROTEIN 5"/>
    <property type="match status" value="1"/>
</dbReference>
<dbReference type="Pfam" id="PF00168">
    <property type="entry name" value="C2"/>
    <property type="match status" value="1"/>
</dbReference>
<dbReference type="Pfam" id="PF23025">
    <property type="entry name" value="YbjQ_2"/>
    <property type="match status" value="4"/>
</dbReference>
<dbReference type="Pfam" id="PF23028">
    <property type="entry name" value="YbjQ_3"/>
    <property type="match status" value="1"/>
</dbReference>
<dbReference type="SMART" id="SM00239">
    <property type="entry name" value="C2"/>
    <property type="match status" value="1"/>
</dbReference>
<dbReference type="SUPFAM" id="SSF49562">
    <property type="entry name" value="C2 domain (Calcium/lipid-binding domain, CaLB)"/>
    <property type="match status" value="1"/>
</dbReference>
<dbReference type="PROSITE" id="PS50004">
    <property type="entry name" value="C2"/>
    <property type="match status" value="1"/>
</dbReference>
<proteinExistence type="evidence at transcript level"/>
<evidence type="ECO:0000250" key="1"/>
<evidence type="ECO:0000255" key="2">
    <source>
        <dbReference type="PROSITE-ProRule" id="PRU00041"/>
    </source>
</evidence>
<evidence type="ECO:0000256" key="3">
    <source>
        <dbReference type="SAM" id="MobiDB-lite"/>
    </source>
</evidence>
<protein>
    <recommendedName>
        <fullName>C2 domain-containing protein 5</fullName>
    </recommendedName>
    <alternativeName>
        <fullName>138 kDa C2 domain-containing phosphoprotein</fullName>
    </alternativeName>
</protein>
<accession>Q28BX9</accession>